<feature type="chain" id="PRO_0000076439" description="Transcription factor JunB">
    <location>
        <begin position="1"/>
        <end position="344"/>
    </location>
</feature>
<feature type="domain" description="bZIP" evidence="3">
    <location>
        <begin position="265"/>
        <end position="328"/>
    </location>
</feature>
<feature type="region of interest" description="Disordered" evidence="4">
    <location>
        <begin position="51"/>
        <end position="75"/>
    </location>
</feature>
<feature type="region of interest" description="Disordered" evidence="4">
    <location>
        <begin position="181"/>
        <end position="202"/>
    </location>
</feature>
<feature type="region of interest" description="Disordered" evidence="4">
    <location>
        <begin position="237"/>
        <end position="257"/>
    </location>
</feature>
<feature type="region of interest" description="Basic motif" evidence="3">
    <location>
        <begin position="265"/>
        <end position="292"/>
    </location>
</feature>
<feature type="region of interest" description="Leucine-zipper" evidence="3">
    <location>
        <begin position="293"/>
        <end position="321"/>
    </location>
</feature>
<feature type="compositionally biased region" description="Gly residues" evidence="4">
    <location>
        <begin position="51"/>
        <end position="65"/>
    </location>
</feature>
<feature type="compositionally biased region" description="Low complexity" evidence="4">
    <location>
        <begin position="183"/>
        <end position="192"/>
    </location>
</feature>
<feature type="compositionally biased region" description="Basic and acidic residues" evidence="4">
    <location>
        <begin position="237"/>
        <end position="250"/>
    </location>
</feature>
<feature type="modified residue" description="Phosphothreonine" evidence="2">
    <location>
        <position position="102"/>
    </location>
</feature>
<feature type="modified residue" description="Phosphothreonine" evidence="2">
    <location>
        <position position="104"/>
    </location>
</feature>
<feature type="modified residue" description="Phosphoserine" evidence="2">
    <location>
        <position position="117"/>
    </location>
</feature>
<feature type="modified residue" description="N6-acetyllysine; alternate" evidence="9">
    <location>
        <position position="237"/>
    </location>
</feature>
<feature type="modified residue" description="Phosphoserine" evidence="8">
    <location>
        <position position="248"/>
    </location>
</feature>
<feature type="modified residue" description="Phosphothreonine" evidence="8">
    <location>
        <position position="252"/>
    </location>
</feature>
<feature type="modified residue" description="Phosphoserine" evidence="7 8">
    <location>
        <position position="256"/>
    </location>
</feature>
<feature type="cross-link" description="Glycyl lysine isopeptide (Lys-Gly) (interchain with G-Cter in SUMO2)" evidence="2">
    <location>
        <position position="4"/>
    </location>
</feature>
<feature type="cross-link" description="Glycyl lysine isopeptide (Lys-Gly) (interchain with G-Cter in SUMO2)" evidence="2">
    <location>
        <position position="33"/>
    </location>
</feature>
<feature type="cross-link" description="Glycyl lysine isopeptide (Lys-Gly) (interchain with G-Cter in SUMO2)" evidence="2">
    <location>
        <position position="36"/>
    </location>
</feature>
<feature type="cross-link" description="Glycyl lysine isopeptide (Lys-Gly) (interchain with G-Cter in SUMO2)" evidence="2">
    <location>
        <position position="81"/>
    </location>
</feature>
<feature type="cross-link" description="Glycyl lysine isopeptide (Lys-Gly) (interchain with G-Cter in SUMO2)" evidence="2">
    <location>
        <position position="138"/>
    </location>
</feature>
<feature type="cross-link" description="Glycyl lysine isopeptide (Lys-Gly) (interchain with G-Cter in SUMO1); alternate" evidence="2">
    <location>
        <position position="237"/>
    </location>
</feature>
<feature type="cross-link" description="Glycyl lysine isopeptide (Lys-Gly) (interchain with G-Cter in SUMO2); alternate" evidence="2">
    <location>
        <position position="237"/>
    </location>
</feature>
<feature type="cross-link" description="Glycyl lysine isopeptide (Lys-Gly) (interchain with G-Cter in SUMO2)" evidence="2">
    <location>
        <position position="340"/>
    </location>
</feature>
<feature type="sequence conflict" description="In Ref. 3; BAC40473." evidence="6" ref="3">
    <original>P</original>
    <variation>S</variation>
    <location>
        <position position="53"/>
    </location>
</feature>
<feature type="sequence conflict" description="In Ref. 2; AAA74916." evidence="6" ref="2">
    <original>G</original>
    <variation>R</variation>
    <location>
        <position position="200"/>
    </location>
</feature>
<protein>
    <recommendedName>
        <fullName evidence="6">Transcription factor JunB</fullName>
    </recommendedName>
    <alternativeName>
        <fullName>MyD21</fullName>
    </alternativeName>
    <alternativeName>
        <fullName evidence="6">Transcription factor AP-1 subunit JunB</fullName>
    </alternativeName>
</protein>
<reference key="1">
    <citation type="journal article" date="1988" name="Proc. Natl. Acad. Sci. U.S.A.">
        <title>A gene activated by growth factors is related to the oncogene v-jun.</title>
        <authorList>
            <person name="Ryder K."/>
            <person name="Lau L.F."/>
            <person name="Nathans D."/>
        </authorList>
    </citation>
    <scope>NUCLEOTIDE SEQUENCE [MRNA]</scope>
</reference>
<reference key="2">
    <citation type="journal article" date="1995" name="Genomics">
        <title>Complex genetic organization of junB: multiple blocks of flanking evolutionarily conserved sequence at the murine and human junB loci.</title>
        <authorList>
            <person name="Phinney D.G."/>
            <person name="Tseng S.W."/>
            <person name="Ryder K."/>
        </authorList>
    </citation>
    <scope>NUCLEOTIDE SEQUENCE [GENOMIC DNA]</scope>
    <source>
        <strain>BALB/cJ</strain>
    </source>
</reference>
<reference key="3">
    <citation type="journal article" date="2005" name="Science">
        <title>The transcriptional landscape of the mammalian genome.</title>
        <authorList>
            <person name="Carninci P."/>
            <person name="Kasukawa T."/>
            <person name="Katayama S."/>
            <person name="Gough J."/>
            <person name="Frith M.C."/>
            <person name="Maeda N."/>
            <person name="Oyama R."/>
            <person name="Ravasi T."/>
            <person name="Lenhard B."/>
            <person name="Wells C."/>
            <person name="Kodzius R."/>
            <person name="Shimokawa K."/>
            <person name="Bajic V.B."/>
            <person name="Brenner S.E."/>
            <person name="Batalov S."/>
            <person name="Forrest A.R."/>
            <person name="Zavolan M."/>
            <person name="Davis M.J."/>
            <person name="Wilming L.G."/>
            <person name="Aidinis V."/>
            <person name="Allen J.E."/>
            <person name="Ambesi-Impiombato A."/>
            <person name="Apweiler R."/>
            <person name="Aturaliya R.N."/>
            <person name="Bailey T.L."/>
            <person name="Bansal M."/>
            <person name="Baxter L."/>
            <person name="Beisel K.W."/>
            <person name="Bersano T."/>
            <person name="Bono H."/>
            <person name="Chalk A.M."/>
            <person name="Chiu K.P."/>
            <person name="Choudhary V."/>
            <person name="Christoffels A."/>
            <person name="Clutterbuck D.R."/>
            <person name="Crowe M.L."/>
            <person name="Dalla E."/>
            <person name="Dalrymple B.P."/>
            <person name="de Bono B."/>
            <person name="Della Gatta G."/>
            <person name="di Bernardo D."/>
            <person name="Down T."/>
            <person name="Engstrom P."/>
            <person name="Fagiolini M."/>
            <person name="Faulkner G."/>
            <person name="Fletcher C.F."/>
            <person name="Fukushima T."/>
            <person name="Furuno M."/>
            <person name="Futaki S."/>
            <person name="Gariboldi M."/>
            <person name="Georgii-Hemming P."/>
            <person name="Gingeras T.R."/>
            <person name="Gojobori T."/>
            <person name="Green R.E."/>
            <person name="Gustincich S."/>
            <person name="Harbers M."/>
            <person name="Hayashi Y."/>
            <person name="Hensch T.K."/>
            <person name="Hirokawa N."/>
            <person name="Hill D."/>
            <person name="Huminiecki L."/>
            <person name="Iacono M."/>
            <person name="Ikeo K."/>
            <person name="Iwama A."/>
            <person name="Ishikawa T."/>
            <person name="Jakt M."/>
            <person name="Kanapin A."/>
            <person name="Katoh M."/>
            <person name="Kawasawa Y."/>
            <person name="Kelso J."/>
            <person name="Kitamura H."/>
            <person name="Kitano H."/>
            <person name="Kollias G."/>
            <person name="Krishnan S.P."/>
            <person name="Kruger A."/>
            <person name="Kummerfeld S.K."/>
            <person name="Kurochkin I.V."/>
            <person name="Lareau L.F."/>
            <person name="Lazarevic D."/>
            <person name="Lipovich L."/>
            <person name="Liu J."/>
            <person name="Liuni S."/>
            <person name="McWilliam S."/>
            <person name="Madan Babu M."/>
            <person name="Madera M."/>
            <person name="Marchionni L."/>
            <person name="Matsuda H."/>
            <person name="Matsuzawa S."/>
            <person name="Miki H."/>
            <person name="Mignone F."/>
            <person name="Miyake S."/>
            <person name="Morris K."/>
            <person name="Mottagui-Tabar S."/>
            <person name="Mulder N."/>
            <person name="Nakano N."/>
            <person name="Nakauchi H."/>
            <person name="Ng P."/>
            <person name="Nilsson R."/>
            <person name="Nishiguchi S."/>
            <person name="Nishikawa S."/>
            <person name="Nori F."/>
            <person name="Ohara O."/>
            <person name="Okazaki Y."/>
            <person name="Orlando V."/>
            <person name="Pang K.C."/>
            <person name="Pavan W.J."/>
            <person name="Pavesi G."/>
            <person name="Pesole G."/>
            <person name="Petrovsky N."/>
            <person name="Piazza S."/>
            <person name="Reed J."/>
            <person name="Reid J.F."/>
            <person name="Ring B.Z."/>
            <person name="Ringwald M."/>
            <person name="Rost B."/>
            <person name="Ruan Y."/>
            <person name="Salzberg S.L."/>
            <person name="Sandelin A."/>
            <person name="Schneider C."/>
            <person name="Schoenbach C."/>
            <person name="Sekiguchi K."/>
            <person name="Semple C.A."/>
            <person name="Seno S."/>
            <person name="Sessa L."/>
            <person name="Sheng Y."/>
            <person name="Shibata Y."/>
            <person name="Shimada H."/>
            <person name="Shimada K."/>
            <person name="Silva D."/>
            <person name="Sinclair B."/>
            <person name="Sperling S."/>
            <person name="Stupka E."/>
            <person name="Sugiura K."/>
            <person name="Sultana R."/>
            <person name="Takenaka Y."/>
            <person name="Taki K."/>
            <person name="Tammoja K."/>
            <person name="Tan S.L."/>
            <person name="Tang S."/>
            <person name="Taylor M.S."/>
            <person name="Tegner J."/>
            <person name="Teichmann S.A."/>
            <person name="Ueda H.R."/>
            <person name="van Nimwegen E."/>
            <person name="Verardo R."/>
            <person name="Wei C.L."/>
            <person name="Yagi K."/>
            <person name="Yamanishi H."/>
            <person name="Zabarovsky E."/>
            <person name="Zhu S."/>
            <person name="Zimmer A."/>
            <person name="Hide W."/>
            <person name="Bult C."/>
            <person name="Grimmond S.M."/>
            <person name="Teasdale R.D."/>
            <person name="Liu E.T."/>
            <person name="Brusic V."/>
            <person name="Quackenbush J."/>
            <person name="Wahlestedt C."/>
            <person name="Mattick J.S."/>
            <person name="Hume D.A."/>
            <person name="Kai C."/>
            <person name="Sasaki D."/>
            <person name="Tomaru Y."/>
            <person name="Fukuda S."/>
            <person name="Kanamori-Katayama M."/>
            <person name="Suzuki M."/>
            <person name="Aoki J."/>
            <person name="Arakawa T."/>
            <person name="Iida J."/>
            <person name="Imamura K."/>
            <person name="Itoh M."/>
            <person name="Kato T."/>
            <person name="Kawaji H."/>
            <person name="Kawagashira N."/>
            <person name="Kawashima T."/>
            <person name="Kojima M."/>
            <person name="Kondo S."/>
            <person name="Konno H."/>
            <person name="Nakano K."/>
            <person name="Ninomiya N."/>
            <person name="Nishio T."/>
            <person name="Okada M."/>
            <person name="Plessy C."/>
            <person name="Shibata K."/>
            <person name="Shiraki T."/>
            <person name="Suzuki S."/>
            <person name="Tagami M."/>
            <person name="Waki K."/>
            <person name="Watahiki A."/>
            <person name="Okamura-Oho Y."/>
            <person name="Suzuki H."/>
            <person name="Kawai J."/>
            <person name="Hayashizaki Y."/>
        </authorList>
    </citation>
    <scope>NUCLEOTIDE SEQUENCE [LARGE SCALE MRNA]</scope>
    <source>
        <strain>NOD</strain>
        <tissue>Thymus</tissue>
    </source>
</reference>
<reference key="4">
    <citation type="journal article" date="2004" name="Genome Res.">
        <title>The status, quality, and expansion of the NIH full-length cDNA project: the Mammalian Gene Collection (MGC).</title>
        <authorList>
            <consortium name="The MGC Project Team"/>
        </authorList>
    </citation>
    <scope>NUCLEOTIDE SEQUENCE [LARGE SCALE MRNA]</scope>
    <source>
        <strain>FVB/N</strain>
        <tissue>Mammary gland</tissue>
    </source>
</reference>
<reference key="5">
    <citation type="journal article" date="1990" name="Oncogene">
        <title>Complexity of the immediate early response of myeloid cells to terminal differentiation and growth arrest includes ICAM-1, Jun-B and histone variants.</title>
        <authorList>
            <person name="Lord K.A."/>
            <person name="Hoffman-Liebermann B."/>
            <person name="Liebermann D.A."/>
        </authorList>
    </citation>
    <scope>NUCLEOTIDE SEQUENCE [MRNA] OF 1-30</scope>
</reference>
<reference key="6">
    <citation type="journal article" date="1989" name="EMBO J.">
        <title>The product of a novel growth factor activated gene, fos B, interacts with JUN proteins enhancing their DNA binding activity.</title>
        <authorList>
            <person name="Zerial M."/>
            <person name="Toschi L."/>
            <person name="Ryseck R.-P."/>
            <person name="Schuermann M."/>
            <person name="Mueller R."/>
            <person name="Bravo R."/>
        </authorList>
    </citation>
    <scope>FUNCTION</scope>
    <scope>IDENTIFICATION IN AN AP-1 COMPLEX</scope>
    <scope>SUBUNIT</scope>
    <scope>INTERACTION WITH FOSB</scope>
</reference>
<reference key="7">
    <citation type="journal article" date="2007" name="Proc. Natl. Acad. Sci. U.S.A.">
        <title>Large-scale phosphorylation analysis of mouse liver.</title>
        <authorList>
            <person name="Villen J."/>
            <person name="Beausoleil S.A."/>
            <person name="Gerber S.A."/>
            <person name="Gygi S.P."/>
        </authorList>
    </citation>
    <scope>PHOSPHORYLATION [LARGE SCALE ANALYSIS] AT SER-256</scope>
    <scope>IDENTIFICATION BY MASS SPECTROMETRY [LARGE SCALE ANALYSIS]</scope>
    <source>
        <tissue>Liver</tissue>
    </source>
</reference>
<reference key="8">
    <citation type="journal article" date="2010" name="Cell">
        <title>A tissue-specific atlas of mouse protein phosphorylation and expression.</title>
        <authorList>
            <person name="Huttlin E.L."/>
            <person name="Jedrychowski M.P."/>
            <person name="Elias J.E."/>
            <person name="Goswami T."/>
            <person name="Rad R."/>
            <person name="Beausoleil S.A."/>
            <person name="Villen J."/>
            <person name="Haas W."/>
            <person name="Sowa M.E."/>
            <person name="Gygi S.P."/>
        </authorList>
    </citation>
    <scope>PHOSPHORYLATION [LARGE SCALE ANALYSIS] AT SER-248; THR-252 AND SER-256</scope>
    <scope>IDENTIFICATION BY MASS SPECTROMETRY [LARGE SCALE ANALYSIS]</scope>
    <source>
        <tissue>Brain</tissue>
        <tissue>Heart</tissue>
        <tissue>Kidney</tissue>
        <tissue>Lung</tissue>
        <tissue>Spleen</tissue>
    </source>
</reference>
<reference key="9">
    <citation type="journal article" date="2013" name="Mol. Cell">
        <title>SIRT5-mediated lysine desuccinylation impacts diverse metabolic pathways.</title>
        <authorList>
            <person name="Park J."/>
            <person name="Chen Y."/>
            <person name="Tishkoff D.X."/>
            <person name="Peng C."/>
            <person name="Tan M."/>
            <person name="Dai L."/>
            <person name="Xie Z."/>
            <person name="Zhang Y."/>
            <person name="Zwaans B.M."/>
            <person name="Skinner M.E."/>
            <person name="Lombard D.B."/>
            <person name="Zhao Y."/>
        </authorList>
    </citation>
    <scope>ACETYLATION [LARGE SCALE ANALYSIS] AT LYS-237</scope>
    <scope>IDENTIFICATION BY MASS SPECTROMETRY [LARGE SCALE ANALYSIS]</scope>
    <source>
        <tissue>Embryonic fibroblast</tissue>
    </source>
</reference>
<accession>P09450</accession>
<accession>Q8C2G9</accession>
<evidence type="ECO:0000250" key="1"/>
<evidence type="ECO:0000250" key="2">
    <source>
        <dbReference type="UniProtKB" id="P17275"/>
    </source>
</evidence>
<evidence type="ECO:0000255" key="3">
    <source>
        <dbReference type="PROSITE-ProRule" id="PRU00978"/>
    </source>
</evidence>
<evidence type="ECO:0000256" key="4">
    <source>
        <dbReference type="SAM" id="MobiDB-lite"/>
    </source>
</evidence>
<evidence type="ECO:0000269" key="5">
    <source>
    </source>
</evidence>
<evidence type="ECO:0000305" key="6"/>
<evidence type="ECO:0007744" key="7">
    <source>
    </source>
</evidence>
<evidence type="ECO:0007744" key="8">
    <source>
    </source>
</evidence>
<evidence type="ECO:0007744" key="9">
    <source>
    </source>
</evidence>
<proteinExistence type="evidence at protein level"/>
<name>JUNB_MOUSE</name>
<dbReference type="EMBL" id="J03236">
    <property type="protein sequence ID" value="AAA39343.1"/>
    <property type="molecule type" value="mRNA"/>
</dbReference>
<dbReference type="EMBL" id="U20735">
    <property type="protein sequence ID" value="AAA74916.1"/>
    <property type="molecule type" value="Genomic_DNA"/>
</dbReference>
<dbReference type="EMBL" id="AK088643">
    <property type="protein sequence ID" value="BAC40473.1"/>
    <property type="molecule type" value="mRNA"/>
</dbReference>
<dbReference type="EMBL" id="BC003790">
    <property type="protein sequence ID" value="AAH03790.1"/>
    <property type="molecule type" value="mRNA"/>
</dbReference>
<dbReference type="EMBL" id="X54332">
    <property type="status" value="NOT_ANNOTATED_CDS"/>
    <property type="molecule type" value="mRNA"/>
</dbReference>
<dbReference type="CCDS" id="CCDS22488.1"/>
<dbReference type="PIR" id="A28963">
    <property type="entry name" value="TVMSJB"/>
</dbReference>
<dbReference type="RefSeq" id="NP_032442.1">
    <property type="nucleotide sequence ID" value="NM_008416.3"/>
</dbReference>
<dbReference type="SMR" id="P09450"/>
<dbReference type="BioGRID" id="200872">
    <property type="interactions" value="107"/>
</dbReference>
<dbReference type="CORUM" id="P09450"/>
<dbReference type="DIP" id="DIP-1069N"/>
<dbReference type="ELM" id="P09450"/>
<dbReference type="FunCoup" id="P09450">
    <property type="interactions" value="747"/>
</dbReference>
<dbReference type="IntAct" id="P09450">
    <property type="interactions" value="105"/>
</dbReference>
<dbReference type="STRING" id="10090.ENSMUSP00000064680"/>
<dbReference type="GlyGen" id="P09450">
    <property type="glycosylation" value="1 site"/>
</dbReference>
<dbReference type="iPTMnet" id="P09450"/>
<dbReference type="PhosphoSitePlus" id="P09450"/>
<dbReference type="jPOST" id="P09450"/>
<dbReference type="PaxDb" id="10090-ENSMUSP00000064680"/>
<dbReference type="PeptideAtlas" id="P09450"/>
<dbReference type="ProteomicsDB" id="269036"/>
<dbReference type="Pumba" id="P09450"/>
<dbReference type="Antibodypedia" id="3847">
    <property type="antibodies" value="922 antibodies from 44 providers"/>
</dbReference>
<dbReference type="DNASU" id="16477"/>
<dbReference type="Ensembl" id="ENSMUST00000064922.7">
    <property type="protein sequence ID" value="ENSMUSP00000064680.6"/>
    <property type="gene ID" value="ENSMUSG00000052837.8"/>
</dbReference>
<dbReference type="GeneID" id="16477"/>
<dbReference type="KEGG" id="mmu:16477"/>
<dbReference type="UCSC" id="uc009mop.1">
    <property type="organism name" value="mouse"/>
</dbReference>
<dbReference type="AGR" id="MGI:96647"/>
<dbReference type="CTD" id="3726"/>
<dbReference type="MGI" id="MGI:96647">
    <property type="gene designation" value="Junb"/>
</dbReference>
<dbReference type="VEuPathDB" id="HostDB:ENSMUSG00000052837"/>
<dbReference type="eggNOG" id="KOG0837">
    <property type="taxonomic scope" value="Eukaryota"/>
</dbReference>
<dbReference type="GeneTree" id="ENSGT00940000161195"/>
<dbReference type="HOGENOM" id="CLU_057007_0_0_1"/>
<dbReference type="InParanoid" id="P09450"/>
<dbReference type="OMA" id="HFQHAAR"/>
<dbReference type="OrthoDB" id="2187714at2759"/>
<dbReference type="PhylomeDB" id="P09450"/>
<dbReference type="BioGRID-ORCS" id="16477">
    <property type="hits" value="6 hits in 81 CRISPR screens"/>
</dbReference>
<dbReference type="ChiTaRS" id="Junb">
    <property type="organism name" value="mouse"/>
</dbReference>
<dbReference type="PRO" id="PR:P09450"/>
<dbReference type="Proteomes" id="UP000000589">
    <property type="component" value="Chromosome 8"/>
</dbReference>
<dbReference type="RNAct" id="P09450">
    <property type="molecule type" value="protein"/>
</dbReference>
<dbReference type="Bgee" id="ENSMUSG00000052837">
    <property type="expression patterns" value="Expressed in granulocyte and 154 other cell types or tissues"/>
</dbReference>
<dbReference type="ExpressionAtlas" id="P09450">
    <property type="expression patterns" value="baseline and differential"/>
</dbReference>
<dbReference type="GO" id="GO:0005654">
    <property type="term" value="C:nucleoplasm"/>
    <property type="evidence" value="ECO:0007669"/>
    <property type="project" value="Ensembl"/>
</dbReference>
<dbReference type="GO" id="GO:0035976">
    <property type="term" value="C:transcription factor AP-1 complex"/>
    <property type="evidence" value="ECO:0007669"/>
    <property type="project" value="Ensembl"/>
</dbReference>
<dbReference type="GO" id="GO:0003677">
    <property type="term" value="F:DNA binding"/>
    <property type="evidence" value="ECO:0000314"/>
    <property type="project" value="MGI"/>
</dbReference>
<dbReference type="GO" id="GO:0001228">
    <property type="term" value="F:DNA-binding transcription activator activity, RNA polymerase II-specific"/>
    <property type="evidence" value="ECO:0000315"/>
    <property type="project" value="NTNU_SB"/>
</dbReference>
<dbReference type="GO" id="GO:0000978">
    <property type="term" value="F:RNA polymerase II cis-regulatory region sequence-specific DNA binding"/>
    <property type="evidence" value="ECO:0000315"/>
    <property type="project" value="NTNU_SB"/>
</dbReference>
<dbReference type="GO" id="GO:0000977">
    <property type="term" value="F:RNA polymerase II transcription regulatory region sequence-specific DNA binding"/>
    <property type="evidence" value="ECO:0000314"/>
    <property type="project" value="MGI"/>
</dbReference>
<dbReference type="GO" id="GO:0030154">
    <property type="term" value="P:cell differentiation"/>
    <property type="evidence" value="ECO:0000314"/>
    <property type="project" value="MGI"/>
</dbReference>
<dbReference type="GO" id="GO:0071277">
    <property type="term" value="P:cellular response to calcium ion"/>
    <property type="evidence" value="ECO:0000314"/>
    <property type="project" value="MGI"/>
</dbReference>
<dbReference type="GO" id="GO:0046697">
    <property type="term" value="P:decidualization"/>
    <property type="evidence" value="ECO:0000315"/>
    <property type="project" value="MGI"/>
</dbReference>
<dbReference type="GO" id="GO:0060136">
    <property type="term" value="P:embryonic process involved in female pregnancy"/>
    <property type="evidence" value="ECO:0000315"/>
    <property type="project" value="MGI"/>
</dbReference>
<dbReference type="GO" id="GO:0001701">
    <property type="term" value="P:in utero embryonic development"/>
    <property type="evidence" value="ECO:0000315"/>
    <property type="project" value="MGI"/>
</dbReference>
<dbReference type="GO" id="GO:0060716">
    <property type="term" value="P:labyrinthine layer blood vessel development"/>
    <property type="evidence" value="ECO:0000315"/>
    <property type="project" value="MGI"/>
</dbReference>
<dbReference type="GO" id="GO:0001649">
    <property type="term" value="P:osteoblast differentiation"/>
    <property type="evidence" value="ECO:0000315"/>
    <property type="project" value="MGI"/>
</dbReference>
<dbReference type="GO" id="GO:0033687">
    <property type="term" value="P:osteoblast proliferation"/>
    <property type="evidence" value="ECO:0000315"/>
    <property type="project" value="MGI"/>
</dbReference>
<dbReference type="GO" id="GO:0030316">
    <property type="term" value="P:osteoclast differentiation"/>
    <property type="evidence" value="ECO:0000315"/>
    <property type="project" value="MGI"/>
</dbReference>
<dbReference type="GO" id="GO:0002158">
    <property type="term" value="P:osteoclast proliferation"/>
    <property type="evidence" value="ECO:0000315"/>
    <property type="project" value="MGI"/>
</dbReference>
<dbReference type="GO" id="GO:0045597">
    <property type="term" value="P:positive regulation of cell differentiation"/>
    <property type="evidence" value="ECO:0000314"/>
    <property type="project" value="MGI"/>
</dbReference>
<dbReference type="GO" id="GO:0045944">
    <property type="term" value="P:positive regulation of transcription by RNA polymerase II"/>
    <property type="evidence" value="ECO:0000315"/>
    <property type="project" value="NTNU_SB"/>
</dbReference>
<dbReference type="GO" id="GO:0051726">
    <property type="term" value="P:regulation of cell cycle"/>
    <property type="evidence" value="ECO:0000314"/>
    <property type="project" value="MGI"/>
</dbReference>
<dbReference type="GO" id="GO:0006355">
    <property type="term" value="P:regulation of DNA-templated transcription"/>
    <property type="evidence" value="ECO:0000314"/>
    <property type="project" value="MGI"/>
</dbReference>
<dbReference type="GO" id="GO:0001829">
    <property type="term" value="P:trophectodermal cell differentiation"/>
    <property type="evidence" value="ECO:0000314"/>
    <property type="project" value="MGI"/>
</dbReference>
<dbReference type="GO" id="GO:0001570">
    <property type="term" value="P:vasculogenesis"/>
    <property type="evidence" value="ECO:0000315"/>
    <property type="project" value="MGI"/>
</dbReference>
<dbReference type="CDD" id="cd14696">
    <property type="entry name" value="bZIP_Jun"/>
    <property type="match status" value="1"/>
</dbReference>
<dbReference type="FunFam" id="1.20.5.170:FF:000012">
    <property type="entry name" value="Putative transcription factor AP-1"/>
    <property type="match status" value="1"/>
</dbReference>
<dbReference type="Gene3D" id="1.20.5.170">
    <property type="match status" value="1"/>
</dbReference>
<dbReference type="InterPro" id="IPR050946">
    <property type="entry name" value="AP-1_TF_bZIP"/>
</dbReference>
<dbReference type="InterPro" id="IPR004827">
    <property type="entry name" value="bZIP"/>
</dbReference>
<dbReference type="InterPro" id="IPR046347">
    <property type="entry name" value="bZIP_sf"/>
</dbReference>
<dbReference type="InterPro" id="IPR005643">
    <property type="entry name" value="JNK"/>
</dbReference>
<dbReference type="InterPro" id="IPR002112">
    <property type="entry name" value="Leuzip_Jun"/>
</dbReference>
<dbReference type="InterPro" id="IPR008917">
    <property type="entry name" value="TF_DNA-bd_sf"/>
</dbReference>
<dbReference type="PANTHER" id="PTHR11462">
    <property type="entry name" value="JUN TRANSCRIPTION FACTOR-RELATED"/>
    <property type="match status" value="1"/>
</dbReference>
<dbReference type="PANTHER" id="PTHR11462:SF37">
    <property type="entry name" value="TRANSCRIPTION FACTOR JUNB"/>
    <property type="match status" value="1"/>
</dbReference>
<dbReference type="Pfam" id="PF00170">
    <property type="entry name" value="bZIP_1"/>
    <property type="match status" value="1"/>
</dbReference>
<dbReference type="Pfam" id="PF03957">
    <property type="entry name" value="Jun"/>
    <property type="match status" value="1"/>
</dbReference>
<dbReference type="PRINTS" id="PR00043">
    <property type="entry name" value="LEUZIPPRJUN"/>
</dbReference>
<dbReference type="SMART" id="SM00338">
    <property type="entry name" value="BRLZ"/>
    <property type="match status" value="1"/>
</dbReference>
<dbReference type="SUPFAM" id="SSF47454">
    <property type="entry name" value="A DNA-binding domain in eukaryotic transcription factors"/>
    <property type="match status" value="1"/>
</dbReference>
<dbReference type="SUPFAM" id="SSF57959">
    <property type="entry name" value="Leucine zipper domain"/>
    <property type="match status" value="1"/>
</dbReference>
<dbReference type="PROSITE" id="PS50217">
    <property type="entry name" value="BZIP"/>
    <property type="match status" value="1"/>
</dbReference>
<dbReference type="PROSITE" id="PS00036">
    <property type="entry name" value="BZIP_BASIC"/>
    <property type="match status" value="1"/>
</dbReference>
<organism>
    <name type="scientific">Mus musculus</name>
    <name type="common">Mouse</name>
    <dbReference type="NCBI Taxonomy" id="10090"/>
    <lineage>
        <taxon>Eukaryota</taxon>
        <taxon>Metazoa</taxon>
        <taxon>Chordata</taxon>
        <taxon>Craniata</taxon>
        <taxon>Vertebrata</taxon>
        <taxon>Euteleostomi</taxon>
        <taxon>Mammalia</taxon>
        <taxon>Eutheria</taxon>
        <taxon>Euarchontoglires</taxon>
        <taxon>Glires</taxon>
        <taxon>Rodentia</taxon>
        <taxon>Myomorpha</taxon>
        <taxon>Muroidea</taxon>
        <taxon>Muridae</taxon>
        <taxon>Murinae</taxon>
        <taxon>Mus</taxon>
        <taxon>Mus</taxon>
    </lineage>
</organism>
<gene>
    <name type="primary">Junb</name>
    <name type="synonym">Jun-b</name>
</gene>
<keyword id="KW-0007">Acetylation</keyword>
<keyword id="KW-0238">DNA-binding</keyword>
<keyword id="KW-1017">Isopeptide bond</keyword>
<keyword id="KW-0539">Nucleus</keyword>
<keyword id="KW-0597">Phosphoprotein</keyword>
<keyword id="KW-1185">Reference proteome</keyword>
<keyword id="KW-0804">Transcription</keyword>
<keyword id="KW-0805">Transcription regulation</keyword>
<keyword id="KW-0832">Ubl conjugation</keyword>
<sequence length="344" mass="35765">MCTKMEQPFYHDDSYAAAGYGRSPGSLSLHDYKLLKPTLALNLADPYRGLKGPGARGPGPEGSGAGSYFSGQGSDTGASLKLASTELERLIVPNSNGVITTTPTPPGQYFYPRGGGSGGGTGGGVTEEQEGFADGFVKALDDLHKMNHVTPPNVSLGASGGPQAGPGGVYAGPEPPPVYTNLSSYSPASAPSGGSGTAVGTGSSYPTATISYLPHAPPFAGGHPAQLGLSRGASAFKEEPQTVPEARSRDATPPVSPINMEDQERIKVERKRLRNRLAATKCRKRKLERIARLEDKVKTLKAENAGLSSAAGLLREQVAQLKQKVMTHVSNGCQLLLGVKGHAF</sequence>
<comment type="function">
    <text evidence="5">Transcription factor involved in regulating gene activity following the primary growth factor response. Binds to the DNA sequence 5'-TGA[GC]TCA-3'. Heterodimerizes with proteins of the FOS family to form an AP-1 transcription complex, thereby enhancing its DNA binding activity to an AP-1 consensus sequence 5'-TGA[GC]TCA-3' and enhancing its transcriptional activity (PubMed:2498083).</text>
</comment>
<comment type="subunit">
    <text evidence="2 5">Binds DNA as a homodimer or as a heterodimer with another member of the Jun/Fos family (By similarity). Component of an AP-1 transcription factor complex composed of JUN-FOS heterodimers (PubMed:2498083). As part of the AP-1 transcription factor complex, forms heterodimers with FOSB, thereby binding to the AP-1 consensus sequence and stimulating transcription (PubMed:2498083). Interacts with NFE2 (via its WW domains) (By similarity).</text>
</comment>
<comment type="interaction">
    <interactant intactId="EBI-5347760">
        <id>P09450</id>
    </interactant>
    <interactant intactId="EBI-10889526">
        <id>Q9DGW5</id>
        <label>MDV005</label>
    </interactant>
    <organismsDiffer>true</organismsDiffer>
    <experiments>2</experiments>
</comment>
<comment type="subcellular location">
    <subcellularLocation>
        <location>Nucleus</location>
    </subcellularLocation>
</comment>
<comment type="induction">
    <text>By growth factors.</text>
</comment>
<comment type="PTM">
    <text evidence="1">Ubiquitinated by ITCH, leading to its degradation.</text>
</comment>
<comment type="similarity">
    <text evidence="6">Belongs to the bZIP family. Jun subfamily.</text>
</comment>